<feature type="chain" id="PRO_0000128899" description="4-hydroxy-3-methylbut-2-enyl diphosphate reductase">
    <location>
        <begin position="1"/>
        <end position="316"/>
    </location>
</feature>
<feature type="active site" description="Proton donor" evidence="1">
    <location>
        <position position="126"/>
    </location>
</feature>
<feature type="binding site" evidence="1">
    <location>
        <position position="12"/>
    </location>
    <ligand>
        <name>[4Fe-4S] cluster</name>
        <dbReference type="ChEBI" id="CHEBI:49883"/>
    </ligand>
</feature>
<feature type="binding site" evidence="1">
    <location>
        <position position="41"/>
    </location>
    <ligand>
        <name>(2E)-4-hydroxy-3-methylbut-2-enyl diphosphate</name>
        <dbReference type="ChEBI" id="CHEBI:128753"/>
    </ligand>
</feature>
<feature type="binding site" evidence="1">
    <location>
        <position position="41"/>
    </location>
    <ligand>
        <name>dimethylallyl diphosphate</name>
        <dbReference type="ChEBI" id="CHEBI:57623"/>
    </ligand>
</feature>
<feature type="binding site" evidence="1">
    <location>
        <position position="41"/>
    </location>
    <ligand>
        <name>isopentenyl diphosphate</name>
        <dbReference type="ChEBI" id="CHEBI:128769"/>
    </ligand>
</feature>
<feature type="binding site" evidence="1">
    <location>
        <position position="74"/>
    </location>
    <ligand>
        <name>(2E)-4-hydroxy-3-methylbut-2-enyl diphosphate</name>
        <dbReference type="ChEBI" id="CHEBI:128753"/>
    </ligand>
</feature>
<feature type="binding site" evidence="1">
    <location>
        <position position="74"/>
    </location>
    <ligand>
        <name>dimethylallyl diphosphate</name>
        <dbReference type="ChEBI" id="CHEBI:57623"/>
    </ligand>
</feature>
<feature type="binding site" evidence="1">
    <location>
        <position position="74"/>
    </location>
    <ligand>
        <name>isopentenyl diphosphate</name>
        <dbReference type="ChEBI" id="CHEBI:128769"/>
    </ligand>
</feature>
<feature type="binding site" evidence="1">
    <location>
        <position position="96"/>
    </location>
    <ligand>
        <name>[4Fe-4S] cluster</name>
        <dbReference type="ChEBI" id="CHEBI:49883"/>
    </ligand>
</feature>
<feature type="binding site" evidence="1">
    <location>
        <position position="124"/>
    </location>
    <ligand>
        <name>(2E)-4-hydroxy-3-methylbut-2-enyl diphosphate</name>
        <dbReference type="ChEBI" id="CHEBI:128753"/>
    </ligand>
</feature>
<feature type="binding site" evidence="1">
    <location>
        <position position="124"/>
    </location>
    <ligand>
        <name>dimethylallyl diphosphate</name>
        <dbReference type="ChEBI" id="CHEBI:57623"/>
    </ligand>
</feature>
<feature type="binding site" evidence="1">
    <location>
        <position position="124"/>
    </location>
    <ligand>
        <name>isopentenyl diphosphate</name>
        <dbReference type="ChEBI" id="CHEBI:128769"/>
    </ligand>
</feature>
<feature type="binding site" evidence="1">
    <location>
        <position position="169"/>
    </location>
    <ligand>
        <name>(2E)-4-hydroxy-3-methylbut-2-enyl diphosphate</name>
        <dbReference type="ChEBI" id="CHEBI:128753"/>
    </ligand>
</feature>
<feature type="binding site" evidence="1">
    <location>
        <position position="199"/>
    </location>
    <ligand>
        <name>[4Fe-4S] cluster</name>
        <dbReference type="ChEBI" id="CHEBI:49883"/>
    </ligand>
</feature>
<feature type="binding site" evidence="1">
    <location>
        <position position="227"/>
    </location>
    <ligand>
        <name>(2E)-4-hydroxy-3-methylbut-2-enyl diphosphate</name>
        <dbReference type="ChEBI" id="CHEBI:128753"/>
    </ligand>
</feature>
<feature type="binding site" evidence="1">
    <location>
        <position position="227"/>
    </location>
    <ligand>
        <name>dimethylallyl diphosphate</name>
        <dbReference type="ChEBI" id="CHEBI:57623"/>
    </ligand>
</feature>
<feature type="binding site" evidence="1">
    <location>
        <position position="227"/>
    </location>
    <ligand>
        <name>isopentenyl diphosphate</name>
        <dbReference type="ChEBI" id="CHEBI:128769"/>
    </ligand>
</feature>
<feature type="binding site" evidence="1">
    <location>
        <position position="228"/>
    </location>
    <ligand>
        <name>(2E)-4-hydroxy-3-methylbut-2-enyl diphosphate</name>
        <dbReference type="ChEBI" id="CHEBI:128753"/>
    </ligand>
</feature>
<feature type="binding site" evidence="1">
    <location>
        <position position="228"/>
    </location>
    <ligand>
        <name>dimethylallyl diphosphate</name>
        <dbReference type="ChEBI" id="CHEBI:57623"/>
    </ligand>
</feature>
<feature type="binding site" evidence="1">
    <location>
        <position position="228"/>
    </location>
    <ligand>
        <name>isopentenyl diphosphate</name>
        <dbReference type="ChEBI" id="CHEBI:128769"/>
    </ligand>
</feature>
<feature type="binding site" evidence="1">
    <location>
        <position position="229"/>
    </location>
    <ligand>
        <name>(2E)-4-hydroxy-3-methylbut-2-enyl diphosphate</name>
        <dbReference type="ChEBI" id="CHEBI:128753"/>
    </ligand>
</feature>
<feature type="binding site" evidence="1">
    <location>
        <position position="229"/>
    </location>
    <ligand>
        <name>dimethylallyl diphosphate</name>
        <dbReference type="ChEBI" id="CHEBI:57623"/>
    </ligand>
</feature>
<feature type="binding site" evidence="1">
    <location>
        <position position="229"/>
    </location>
    <ligand>
        <name>isopentenyl diphosphate</name>
        <dbReference type="ChEBI" id="CHEBI:128769"/>
    </ligand>
</feature>
<feature type="binding site" evidence="1">
    <location>
        <position position="271"/>
    </location>
    <ligand>
        <name>(2E)-4-hydroxy-3-methylbut-2-enyl diphosphate</name>
        <dbReference type="ChEBI" id="CHEBI:128753"/>
    </ligand>
</feature>
<feature type="binding site" evidence="1">
    <location>
        <position position="271"/>
    </location>
    <ligand>
        <name>dimethylallyl diphosphate</name>
        <dbReference type="ChEBI" id="CHEBI:57623"/>
    </ligand>
</feature>
<feature type="binding site" evidence="1">
    <location>
        <position position="271"/>
    </location>
    <ligand>
        <name>isopentenyl diphosphate</name>
        <dbReference type="ChEBI" id="CHEBI:128769"/>
    </ligand>
</feature>
<keyword id="KW-0004">4Fe-4S</keyword>
<keyword id="KW-0408">Iron</keyword>
<keyword id="KW-0411">Iron-sulfur</keyword>
<keyword id="KW-0414">Isoprene biosynthesis</keyword>
<keyword id="KW-0479">Metal-binding</keyword>
<keyword id="KW-0560">Oxidoreductase</keyword>
<keyword id="KW-1185">Reference proteome</keyword>
<proteinExistence type="inferred from homology"/>
<sequence length="316" mass="34641">MDVLLANPRGFCAGVDRAIEIVKRAIETLGAPIYVRHEVVHNRFVVDDLKQRGAIFVEELDEVPDDATVIFSAHGVSQAVRVEAERRGLKVFDATCPLVTKVHFEVARHCRAGRDVVLIGHAGHPEVEGTMGQWSRERGPGQIYLVEDIEQVATLQVRQPESLAYTTQTTLSVDDTMGIIEALRVRYPAMQGPKHDDICYATQNRQDAVRDLARQCDLVLVVGSPNSSNSNRLSELARRDGVESYLIDNASEIDPAWIVGKQHIGLTAGASAPQVLVDGVLARLRELGANGVSELAGEPESMVFALPKELRLRLVS</sequence>
<comment type="function">
    <text evidence="1">Catalyzes the conversion of 1-hydroxy-2-methyl-2-(E)-butenyl 4-diphosphate (HMBPP) into a mixture of isopentenyl diphosphate (IPP) and dimethylallyl diphosphate (DMAPP). Acts in the terminal step of the DOXP/MEP pathway for isoprenoid precursor biosynthesis.</text>
</comment>
<comment type="catalytic activity">
    <reaction evidence="1">
        <text>isopentenyl diphosphate + 2 oxidized [2Fe-2S]-[ferredoxin] + H2O = (2E)-4-hydroxy-3-methylbut-2-enyl diphosphate + 2 reduced [2Fe-2S]-[ferredoxin] + 2 H(+)</text>
        <dbReference type="Rhea" id="RHEA:24488"/>
        <dbReference type="Rhea" id="RHEA-COMP:10000"/>
        <dbReference type="Rhea" id="RHEA-COMP:10001"/>
        <dbReference type="ChEBI" id="CHEBI:15377"/>
        <dbReference type="ChEBI" id="CHEBI:15378"/>
        <dbReference type="ChEBI" id="CHEBI:33737"/>
        <dbReference type="ChEBI" id="CHEBI:33738"/>
        <dbReference type="ChEBI" id="CHEBI:128753"/>
        <dbReference type="ChEBI" id="CHEBI:128769"/>
        <dbReference type="EC" id="1.17.7.4"/>
    </reaction>
</comment>
<comment type="catalytic activity">
    <reaction evidence="1">
        <text>dimethylallyl diphosphate + 2 oxidized [2Fe-2S]-[ferredoxin] + H2O = (2E)-4-hydroxy-3-methylbut-2-enyl diphosphate + 2 reduced [2Fe-2S]-[ferredoxin] + 2 H(+)</text>
        <dbReference type="Rhea" id="RHEA:24825"/>
        <dbReference type="Rhea" id="RHEA-COMP:10000"/>
        <dbReference type="Rhea" id="RHEA-COMP:10001"/>
        <dbReference type="ChEBI" id="CHEBI:15377"/>
        <dbReference type="ChEBI" id="CHEBI:15378"/>
        <dbReference type="ChEBI" id="CHEBI:33737"/>
        <dbReference type="ChEBI" id="CHEBI:33738"/>
        <dbReference type="ChEBI" id="CHEBI:57623"/>
        <dbReference type="ChEBI" id="CHEBI:128753"/>
        <dbReference type="EC" id="1.17.7.4"/>
    </reaction>
</comment>
<comment type="cofactor">
    <cofactor evidence="1">
        <name>[4Fe-4S] cluster</name>
        <dbReference type="ChEBI" id="CHEBI:49883"/>
    </cofactor>
    <text evidence="1">Binds 1 [4Fe-4S] cluster per subunit.</text>
</comment>
<comment type="pathway">
    <text evidence="1">Isoprenoid biosynthesis; dimethylallyl diphosphate biosynthesis; dimethylallyl diphosphate from (2E)-4-hydroxy-3-methylbutenyl diphosphate: step 1/1.</text>
</comment>
<comment type="pathway">
    <text evidence="1">Isoprenoid biosynthesis; isopentenyl diphosphate biosynthesis via DXP pathway; isopentenyl diphosphate from 1-deoxy-D-xylulose 5-phosphate: step 6/6.</text>
</comment>
<comment type="similarity">
    <text evidence="1">Belongs to the IspH family.</text>
</comment>
<gene>
    <name evidence="1" type="primary">ispH</name>
    <name type="synonym">lytB</name>
    <name type="ordered locus">XCC1157</name>
</gene>
<name>ISPH_XANCP</name>
<dbReference type="EC" id="1.17.7.4" evidence="1"/>
<dbReference type="EMBL" id="AE008922">
    <property type="protein sequence ID" value="AAM40456.1"/>
    <property type="molecule type" value="Genomic_DNA"/>
</dbReference>
<dbReference type="RefSeq" id="NP_636532.1">
    <property type="nucleotide sequence ID" value="NC_003902.1"/>
</dbReference>
<dbReference type="RefSeq" id="WP_011036355.1">
    <property type="nucleotide sequence ID" value="NC_003902.1"/>
</dbReference>
<dbReference type="SMR" id="Q8PBG4"/>
<dbReference type="STRING" id="190485.XCC1157"/>
<dbReference type="DNASU" id="1001884"/>
<dbReference type="EnsemblBacteria" id="AAM40456">
    <property type="protein sequence ID" value="AAM40456"/>
    <property type="gene ID" value="XCC1157"/>
</dbReference>
<dbReference type="KEGG" id="xcc:XCC1157"/>
<dbReference type="PATRIC" id="fig|190485.4.peg.1238"/>
<dbReference type="eggNOG" id="COG0761">
    <property type="taxonomic scope" value="Bacteria"/>
</dbReference>
<dbReference type="HOGENOM" id="CLU_027486_1_0_6"/>
<dbReference type="OrthoDB" id="9804068at2"/>
<dbReference type="UniPathway" id="UPA00056">
    <property type="reaction ID" value="UER00097"/>
</dbReference>
<dbReference type="UniPathway" id="UPA00059">
    <property type="reaction ID" value="UER00105"/>
</dbReference>
<dbReference type="Proteomes" id="UP000001010">
    <property type="component" value="Chromosome"/>
</dbReference>
<dbReference type="GO" id="GO:0005829">
    <property type="term" value="C:cytosol"/>
    <property type="evidence" value="ECO:0000318"/>
    <property type="project" value="GO_Central"/>
</dbReference>
<dbReference type="GO" id="GO:0051539">
    <property type="term" value="F:4 iron, 4 sulfur cluster binding"/>
    <property type="evidence" value="ECO:0007669"/>
    <property type="project" value="UniProtKB-UniRule"/>
</dbReference>
<dbReference type="GO" id="GO:0051745">
    <property type="term" value="F:4-hydroxy-3-methylbut-2-enyl diphosphate reductase activity"/>
    <property type="evidence" value="ECO:0000318"/>
    <property type="project" value="GO_Central"/>
</dbReference>
<dbReference type="GO" id="GO:0046872">
    <property type="term" value="F:metal ion binding"/>
    <property type="evidence" value="ECO:0007669"/>
    <property type="project" value="UniProtKB-KW"/>
</dbReference>
<dbReference type="GO" id="GO:0050992">
    <property type="term" value="P:dimethylallyl diphosphate biosynthetic process"/>
    <property type="evidence" value="ECO:0007669"/>
    <property type="project" value="UniProtKB-UniRule"/>
</dbReference>
<dbReference type="GO" id="GO:0019288">
    <property type="term" value="P:isopentenyl diphosphate biosynthetic process, methylerythritol 4-phosphate pathway"/>
    <property type="evidence" value="ECO:0000318"/>
    <property type="project" value="GO_Central"/>
</dbReference>
<dbReference type="GO" id="GO:0016114">
    <property type="term" value="P:terpenoid biosynthetic process"/>
    <property type="evidence" value="ECO:0007669"/>
    <property type="project" value="UniProtKB-UniRule"/>
</dbReference>
<dbReference type="CDD" id="cd13944">
    <property type="entry name" value="lytB_ispH"/>
    <property type="match status" value="1"/>
</dbReference>
<dbReference type="Gene3D" id="3.40.50.11270">
    <property type="match status" value="1"/>
</dbReference>
<dbReference type="Gene3D" id="3.40.1010.20">
    <property type="entry name" value="4-hydroxy-3-methylbut-2-enyl diphosphate reductase, catalytic domain"/>
    <property type="match status" value="2"/>
</dbReference>
<dbReference type="HAMAP" id="MF_00191">
    <property type="entry name" value="IspH"/>
    <property type="match status" value="1"/>
</dbReference>
<dbReference type="InterPro" id="IPR003451">
    <property type="entry name" value="LytB/IspH"/>
</dbReference>
<dbReference type="NCBIfam" id="TIGR00216">
    <property type="entry name" value="ispH_lytB"/>
    <property type="match status" value="1"/>
</dbReference>
<dbReference type="NCBIfam" id="NF002188">
    <property type="entry name" value="PRK01045.1-2"/>
    <property type="match status" value="1"/>
</dbReference>
<dbReference type="NCBIfam" id="NF002190">
    <property type="entry name" value="PRK01045.1-4"/>
    <property type="match status" value="1"/>
</dbReference>
<dbReference type="PANTHER" id="PTHR30426">
    <property type="entry name" value="4-HYDROXY-3-METHYLBUT-2-ENYL DIPHOSPHATE REDUCTASE"/>
    <property type="match status" value="1"/>
</dbReference>
<dbReference type="PANTHER" id="PTHR30426:SF0">
    <property type="entry name" value="4-HYDROXY-3-METHYLBUT-2-ENYL DIPHOSPHATE REDUCTASE"/>
    <property type="match status" value="1"/>
</dbReference>
<dbReference type="Pfam" id="PF02401">
    <property type="entry name" value="LYTB"/>
    <property type="match status" value="1"/>
</dbReference>
<protein>
    <recommendedName>
        <fullName evidence="1">4-hydroxy-3-methylbut-2-enyl diphosphate reductase</fullName>
        <shortName evidence="1">HMBPP reductase</shortName>
        <ecNumber evidence="1">1.17.7.4</ecNumber>
    </recommendedName>
</protein>
<accession>Q8PBG4</accession>
<reference key="1">
    <citation type="journal article" date="2002" name="Nature">
        <title>Comparison of the genomes of two Xanthomonas pathogens with differing host specificities.</title>
        <authorList>
            <person name="da Silva A.C.R."/>
            <person name="Ferro J.A."/>
            <person name="Reinach F.C."/>
            <person name="Farah C.S."/>
            <person name="Furlan L.R."/>
            <person name="Quaggio R.B."/>
            <person name="Monteiro-Vitorello C.B."/>
            <person name="Van Sluys M.A."/>
            <person name="Almeida N.F. Jr."/>
            <person name="Alves L.M.C."/>
            <person name="do Amaral A.M."/>
            <person name="Bertolini M.C."/>
            <person name="Camargo L.E.A."/>
            <person name="Camarotte G."/>
            <person name="Cannavan F."/>
            <person name="Cardozo J."/>
            <person name="Chambergo F."/>
            <person name="Ciapina L.P."/>
            <person name="Cicarelli R.M.B."/>
            <person name="Coutinho L.L."/>
            <person name="Cursino-Santos J.R."/>
            <person name="El-Dorry H."/>
            <person name="Faria J.B."/>
            <person name="Ferreira A.J.S."/>
            <person name="Ferreira R.C.C."/>
            <person name="Ferro M.I.T."/>
            <person name="Formighieri E.F."/>
            <person name="Franco M.C."/>
            <person name="Greggio C.C."/>
            <person name="Gruber A."/>
            <person name="Katsuyama A.M."/>
            <person name="Kishi L.T."/>
            <person name="Leite R.P."/>
            <person name="Lemos E.G.M."/>
            <person name="Lemos M.V.F."/>
            <person name="Locali E.C."/>
            <person name="Machado M.A."/>
            <person name="Madeira A.M.B.N."/>
            <person name="Martinez-Rossi N.M."/>
            <person name="Martins E.C."/>
            <person name="Meidanis J."/>
            <person name="Menck C.F.M."/>
            <person name="Miyaki C.Y."/>
            <person name="Moon D.H."/>
            <person name="Moreira L.M."/>
            <person name="Novo M.T.M."/>
            <person name="Okura V.K."/>
            <person name="Oliveira M.C."/>
            <person name="Oliveira V.R."/>
            <person name="Pereira H.A."/>
            <person name="Rossi A."/>
            <person name="Sena J.A.D."/>
            <person name="Silva C."/>
            <person name="de Souza R.F."/>
            <person name="Spinola L.A.F."/>
            <person name="Takita M.A."/>
            <person name="Tamura R.E."/>
            <person name="Teixeira E.C."/>
            <person name="Tezza R.I.D."/>
            <person name="Trindade dos Santos M."/>
            <person name="Truffi D."/>
            <person name="Tsai S.M."/>
            <person name="White F.F."/>
            <person name="Setubal J.C."/>
            <person name="Kitajima J.P."/>
        </authorList>
    </citation>
    <scope>NUCLEOTIDE SEQUENCE [LARGE SCALE GENOMIC DNA]</scope>
    <source>
        <strain>ATCC 33913 / DSM 3586 / NCPPB 528 / LMG 568 / P 25</strain>
    </source>
</reference>
<organism>
    <name type="scientific">Xanthomonas campestris pv. campestris (strain ATCC 33913 / DSM 3586 / NCPPB 528 / LMG 568 / P 25)</name>
    <dbReference type="NCBI Taxonomy" id="190485"/>
    <lineage>
        <taxon>Bacteria</taxon>
        <taxon>Pseudomonadati</taxon>
        <taxon>Pseudomonadota</taxon>
        <taxon>Gammaproteobacteria</taxon>
        <taxon>Lysobacterales</taxon>
        <taxon>Lysobacteraceae</taxon>
        <taxon>Xanthomonas</taxon>
    </lineage>
</organism>
<evidence type="ECO:0000255" key="1">
    <source>
        <dbReference type="HAMAP-Rule" id="MF_00191"/>
    </source>
</evidence>